<proteinExistence type="inferred from homology"/>
<organism>
    <name type="scientific">Chaerilus tryznai</name>
    <name type="common">Scorpion</name>
    <dbReference type="NCBI Taxonomy" id="1464547"/>
    <lineage>
        <taxon>Eukaryota</taxon>
        <taxon>Metazoa</taxon>
        <taxon>Ecdysozoa</taxon>
        <taxon>Arthropoda</taxon>
        <taxon>Chelicerata</taxon>
        <taxon>Arachnida</taxon>
        <taxon>Scorpiones</taxon>
        <taxon>Chaerilida</taxon>
        <taxon>Chaeriloidea</taxon>
        <taxon>Chaerilidae</taxon>
        <taxon>Chaerilus</taxon>
    </lineage>
</organism>
<name>NDB4W_CHATY</name>
<protein>
    <recommendedName>
        <fullName evidence="2">Peptide Ctry2801</fullName>
    </recommendedName>
</protein>
<accession>P0DME5</accession>
<feature type="peptide" id="PRO_0000428683" description="Peptide Ctry2801">
    <location>
        <begin position="1"/>
        <end position="17"/>
    </location>
</feature>
<feature type="modified residue" description="Lysine amide" evidence="1">
    <location>
        <position position="17"/>
    </location>
</feature>
<keyword id="KW-0027">Amidation</keyword>
<keyword id="KW-0929">Antimicrobial</keyword>
<keyword id="KW-0930">Antiviral protein</keyword>
<keyword id="KW-0964">Secreted</keyword>
<sequence>FLSLIPGAISAIASLFK</sequence>
<evidence type="ECO:0000250" key="1"/>
<evidence type="ECO:0000303" key="2">
    <source>
    </source>
</evidence>
<evidence type="ECO:0000305" key="3"/>
<evidence type="ECO:0000305" key="4">
    <source>
    </source>
</evidence>
<reference key="1">
    <citation type="journal article" date="2012" name="J. Biol. Chem.">
        <title>Mucroporin-M1 inhibits hepatitis B virus replication by activating the mitogen-activated protein kinase (MAPK) pathway and down-regulating HNF4alpha in vitro and in vivo.</title>
        <authorList>
            <person name="Zhao Z."/>
            <person name="Hong W."/>
            <person name="Zeng Z."/>
            <person name="Wu Y."/>
            <person name="Hu K."/>
            <person name="Tian X."/>
            <person name="Li W."/>
            <person name="Cao Z."/>
        </authorList>
    </citation>
    <scope>NUCLEOTIDE SEQUENCE [MRNA]</scope>
    <scope>SYNTHESIS</scope>
    <source>
        <tissue>Venom gland</tissue>
    </source>
</reference>
<dbReference type="GO" id="GO:0005576">
    <property type="term" value="C:extracellular region"/>
    <property type="evidence" value="ECO:0007669"/>
    <property type="project" value="UniProtKB-SubCell"/>
</dbReference>
<dbReference type="GO" id="GO:0050688">
    <property type="term" value="P:regulation of defense response to virus"/>
    <property type="evidence" value="ECO:0007669"/>
    <property type="project" value="UniProtKB-KW"/>
</dbReference>
<comment type="subcellular location">
    <subcellularLocation>
        <location evidence="1">Secreted</location>
    </subcellularLocation>
</comment>
<comment type="tissue specificity">
    <text evidence="3">Expressed by the venom gland.</text>
</comment>
<comment type="miscellaneous">
    <text evidence="4">Inhibits hepatitis B virus replication in the HepG2.2.15 cell line by about 40%.</text>
</comment>
<comment type="similarity">
    <text evidence="3">Belongs to the non-disulfide-bridged peptide (NDBP) superfamily. Short antimicrobial peptide (group 4) family.</text>
</comment>